<dbReference type="EMBL" id="AY596297">
    <property type="protein sequence ID" value="AAV47235.1"/>
    <property type="molecule type" value="Genomic_DNA"/>
</dbReference>
<dbReference type="RefSeq" id="WP_004515440.1">
    <property type="nucleotide sequence ID" value="NZ_CP039138.1"/>
</dbReference>
<dbReference type="SMR" id="Q5UZR8"/>
<dbReference type="STRING" id="272569.rrnAC2424"/>
<dbReference type="PaxDb" id="272569-rrnAC2424"/>
<dbReference type="EnsemblBacteria" id="AAV47235">
    <property type="protein sequence ID" value="AAV47235"/>
    <property type="gene ID" value="rrnAC2424"/>
</dbReference>
<dbReference type="KEGG" id="hma:rrnAC2424"/>
<dbReference type="PATRIC" id="fig|272569.17.peg.3037"/>
<dbReference type="eggNOG" id="arCOG04255">
    <property type="taxonomic scope" value="Archaea"/>
</dbReference>
<dbReference type="HOGENOM" id="CLU_115574_0_1_2"/>
<dbReference type="Proteomes" id="UP000001169">
    <property type="component" value="Chromosome I"/>
</dbReference>
<dbReference type="GO" id="GO:0015935">
    <property type="term" value="C:small ribosomal subunit"/>
    <property type="evidence" value="ECO:0007669"/>
    <property type="project" value="InterPro"/>
</dbReference>
<dbReference type="GO" id="GO:0019843">
    <property type="term" value="F:rRNA binding"/>
    <property type="evidence" value="ECO:0007669"/>
    <property type="project" value="UniProtKB-UniRule"/>
</dbReference>
<dbReference type="GO" id="GO:0003735">
    <property type="term" value="F:structural constituent of ribosome"/>
    <property type="evidence" value="ECO:0007669"/>
    <property type="project" value="InterPro"/>
</dbReference>
<dbReference type="GO" id="GO:0006412">
    <property type="term" value="P:translation"/>
    <property type="evidence" value="ECO:0007669"/>
    <property type="project" value="UniProtKB-UniRule"/>
</dbReference>
<dbReference type="CDD" id="cd03367">
    <property type="entry name" value="Ribosomal_S23"/>
    <property type="match status" value="1"/>
</dbReference>
<dbReference type="FunFam" id="2.40.50.140:FF:000007">
    <property type="entry name" value="40S ribosomal protein S23"/>
    <property type="match status" value="1"/>
</dbReference>
<dbReference type="Gene3D" id="2.40.50.140">
    <property type="entry name" value="Nucleic acid-binding proteins"/>
    <property type="match status" value="1"/>
</dbReference>
<dbReference type="HAMAP" id="MF_00403_A">
    <property type="entry name" value="Ribosomal_uS12_A"/>
    <property type="match status" value="1"/>
</dbReference>
<dbReference type="InterPro" id="IPR012340">
    <property type="entry name" value="NA-bd_OB-fold"/>
</dbReference>
<dbReference type="InterPro" id="IPR006032">
    <property type="entry name" value="Ribosomal_uS12"/>
</dbReference>
<dbReference type="InterPro" id="IPR022863">
    <property type="entry name" value="Ribosomal_uS12_arc"/>
</dbReference>
<dbReference type="InterPro" id="IPR005680">
    <property type="entry name" value="Ribosomal_uS12_euk/arc"/>
</dbReference>
<dbReference type="NCBIfam" id="NF003254">
    <property type="entry name" value="PRK04211.1"/>
    <property type="match status" value="1"/>
</dbReference>
<dbReference type="NCBIfam" id="TIGR00982">
    <property type="entry name" value="uS12_E_A"/>
    <property type="match status" value="1"/>
</dbReference>
<dbReference type="PANTHER" id="PTHR11652">
    <property type="entry name" value="30S RIBOSOMAL PROTEIN S12 FAMILY MEMBER"/>
    <property type="match status" value="1"/>
</dbReference>
<dbReference type="Pfam" id="PF00164">
    <property type="entry name" value="Ribosom_S12_S23"/>
    <property type="match status" value="1"/>
</dbReference>
<dbReference type="PIRSF" id="PIRSF002133">
    <property type="entry name" value="Ribosomal_S12/S23"/>
    <property type="match status" value="1"/>
</dbReference>
<dbReference type="SUPFAM" id="SSF50249">
    <property type="entry name" value="Nucleic acid-binding proteins"/>
    <property type="match status" value="1"/>
</dbReference>
<dbReference type="PROSITE" id="PS00055">
    <property type="entry name" value="RIBOSOMAL_S12"/>
    <property type="match status" value="1"/>
</dbReference>
<organism>
    <name type="scientific">Haloarcula marismortui (strain ATCC 43049 / DSM 3752 / JCM 8966 / VKM B-1809)</name>
    <name type="common">Halobacterium marismortui</name>
    <dbReference type="NCBI Taxonomy" id="272569"/>
    <lineage>
        <taxon>Archaea</taxon>
        <taxon>Methanobacteriati</taxon>
        <taxon>Methanobacteriota</taxon>
        <taxon>Stenosarchaea group</taxon>
        <taxon>Halobacteria</taxon>
        <taxon>Halobacteriales</taxon>
        <taxon>Haloarculaceae</taxon>
        <taxon>Haloarcula</taxon>
    </lineage>
</organism>
<keyword id="KW-1185">Reference proteome</keyword>
<keyword id="KW-0687">Ribonucleoprotein</keyword>
<keyword id="KW-0689">Ribosomal protein</keyword>
<keyword id="KW-0694">RNA-binding</keyword>
<keyword id="KW-0699">rRNA-binding</keyword>
<feature type="chain" id="PRO_0000146365" description="Small ribosomal subunit protein uS12">
    <location>
        <begin position="1"/>
        <end position="142"/>
    </location>
</feature>
<feature type="region of interest" description="Disordered" evidence="2">
    <location>
        <begin position="1"/>
        <end position="44"/>
    </location>
</feature>
<feature type="compositionally biased region" description="Basic residues" evidence="2">
    <location>
        <begin position="7"/>
        <end position="18"/>
    </location>
</feature>
<feature type="compositionally biased region" description="Basic and acidic residues" evidence="2">
    <location>
        <begin position="19"/>
        <end position="38"/>
    </location>
</feature>
<reference key="1">
    <citation type="journal article" date="2004" name="Genome Res.">
        <title>Genome sequence of Haloarcula marismortui: a halophilic archaeon from the Dead Sea.</title>
        <authorList>
            <person name="Baliga N.S."/>
            <person name="Bonneau R."/>
            <person name="Facciotti M.T."/>
            <person name="Pan M."/>
            <person name="Glusman G."/>
            <person name="Deutsch E.W."/>
            <person name="Shannon P."/>
            <person name="Chiu Y."/>
            <person name="Weng R.S."/>
            <person name="Gan R.R."/>
            <person name="Hung P."/>
            <person name="Date S.V."/>
            <person name="Marcotte E."/>
            <person name="Hood L."/>
            <person name="Ng W.V."/>
        </authorList>
    </citation>
    <scope>NUCLEOTIDE SEQUENCE [LARGE SCALE GENOMIC DNA]</scope>
    <source>
        <strain>ATCC 43049 / DSM 3752 / JCM 8966 / VKM B-1809</strain>
    </source>
</reference>
<sequence length="142" mass="15440">MANGKYAARKLKKDRQKHRWSDTDYARRERGLGKKSDPLEGAPQGRGIVLEKVGIEAKQPNSAIRKCVRVQLIKNGKQVTAFCPGDGAISFIDEHDEVTIAGIGGAKGRAMGDLSGVNYKVEKVNGVSLIELVRGNAEKPVR</sequence>
<comment type="function">
    <text evidence="1">With S4 and S5 plays an important role in translational accuracy. Located at the interface of the 30S and 50S subunits.</text>
</comment>
<comment type="subunit">
    <text evidence="1">Part of the 30S ribosomal subunit.</text>
</comment>
<comment type="similarity">
    <text evidence="1">Belongs to the universal ribosomal protein uS12 family.</text>
</comment>
<proteinExistence type="inferred from homology"/>
<protein>
    <recommendedName>
        <fullName evidence="1">Small ribosomal subunit protein uS12</fullName>
    </recommendedName>
    <alternativeName>
        <fullName evidence="3">30S ribosomal protein S12</fullName>
    </alternativeName>
</protein>
<gene>
    <name evidence="1" type="primary">rps12</name>
    <name type="ordered locus">rrnAC2424</name>
</gene>
<name>RS12_HALMA</name>
<accession>Q5UZR8</accession>
<evidence type="ECO:0000255" key="1">
    <source>
        <dbReference type="HAMAP-Rule" id="MF_00403"/>
    </source>
</evidence>
<evidence type="ECO:0000256" key="2">
    <source>
        <dbReference type="SAM" id="MobiDB-lite"/>
    </source>
</evidence>
<evidence type="ECO:0000305" key="3"/>